<gene>
    <name type="primary">Slc47a1</name>
    <name type="synonym">Mate1</name>
</gene>
<accession>Q8K0H1</accession>
<accession>Q5SS45</accession>
<accession>Q9CQ64</accession>
<feature type="chain" id="PRO_0000312846" description="Multidrug and toxin extrusion protein 1">
    <location>
        <begin position="1"/>
        <end position="567"/>
    </location>
</feature>
<feature type="topological domain" description="Cytoplasmic" evidence="2">
    <location>
        <begin position="1"/>
        <end position="37"/>
    </location>
</feature>
<feature type="transmembrane region" description="Helical" evidence="2">
    <location>
        <begin position="38"/>
        <end position="58"/>
    </location>
</feature>
<feature type="topological domain" description="Extracellular" evidence="2">
    <location>
        <begin position="59"/>
        <end position="72"/>
    </location>
</feature>
<feature type="transmembrane region" description="Helical" evidence="2">
    <location>
        <begin position="73"/>
        <end position="93"/>
    </location>
</feature>
<feature type="topological domain" description="Cytoplasmic" evidence="2">
    <location>
        <begin position="94"/>
        <end position="120"/>
    </location>
</feature>
<feature type="transmembrane region" description="Helical" evidence="2">
    <location>
        <begin position="121"/>
        <end position="141"/>
    </location>
</feature>
<feature type="topological domain" description="Extracellular" evidence="2">
    <location>
        <begin position="142"/>
        <end position="152"/>
    </location>
</feature>
<feature type="transmembrane region" description="Helical" evidence="2">
    <location>
        <begin position="153"/>
        <end position="173"/>
    </location>
</feature>
<feature type="topological domain" description="Cytoplasmic" evidence="2">
    <location>
        <begin position="174"/>
        <end position="187"/>
    </location>
</feature>
<feature type="transmembrane region" description="Helical" evidence="2">
    <location>
        <begin position="188"/>
        <end position="208"/>
    </location>
</feature>
<feature type="topological domain" description="Extracellular" evidence="2">
    <location>
        <begin position="209"/>
        <end position="216"/>
    </location>
</feature>
<feature type="transmembrane region" description="Helical" evidence="2">
    <location>
        <begin position="217"/>
        <end position="237"/>
    </location>
</feature>
<feature type="topological domain" description="Cytoplasmic" evidence="2">
    <location>
        <begin position="238"/>
        <end position="257"/>
    </location>
</feature>
<feature type="transmembrane region" description="Helical" evidence="2">
    <location>
        <begin position="258"/>
        <end position="277"/>
    </location>
</feature>
<feature type="topological domain" description="Extracellular" evidence="2">
    <location>
        <begin position="278"/>
        <end position="295"/>
    </location>
</feature>
<feature type="transmembrane region" description="Helical" evidence="2">
    <location>
        <begin position="296"/>
        <end position="316"/>
    </location>
</feature>
<feature type="topological domain" description="Cytoplasmic" evidence="2">
    <location>
        <begin position="317"/>
        <end position="336"/>
    </location>
</feature>
<feature type="transmembrane region" description="Helical" evidence="2">
    <location>
        <begin position="337"/>
        <end position="357"/>
    </location>
</feature>
<feature type="topological domain" description="Extracellular" evidence="2">
    <location>
        <begin position="358"/>
        <end position="370"/>
    </location>
</feature>
<feature type="transmembrane region" description="Helical" evidence="2">
    <location>
        <begin position="371"/>
        <end position="391"/>
    </location>
</feature>
<feature type="topological domain" description="Cytoplasmic" evidence="2">
    <location>
        <begin position="392"/>
        <end position="408"/>
    </location>
</feature>
<feature type="transmembrane region" description="Helical" evidence="2">
    <location>
        <begin position="409"/>
        <end position="429"/>
    </location>
</feature>
<feature type="topological domain" description="Extracellular" evidence="2">
    <location>
        <begin position="430"/>
        <end position="437"/>
    </location>
</feature>
<feature type="transmembrane region" description="Helical" evidence="2">
    <location>
        <begin position="438"/>
        <end position="458"/>
    </location>
</feature>
<feature type="topological domain" description="Cytoplasmic" evidence="2">
    <location>
        <begin position="459"/>
        <end position="543"/>
    </location>
</feature>
<feature type="transmembrane region" description="Helical" evidence="2">
    <location>
        <begin position="544"/>
        <end position="564"/>
    </location>
</feature>
<feature type="topological domain" description="Extracellular" evidence="2">
    <location>
        <begin position="565"/>
        <end position="567"/>
    </location>
</feature>
<feature type="modified residue" description="N-acetylmethionine" evidence="1">
    <location>
        <position position="1"/>
    </location>
</feature>
<feature type="modified residue" description="Phosphoserine" evidence="9">
    <location>
        <position position="18"/>
    </location>
</feature>
<feature type="splice variant" id="VSP_029906" description="In isoform 2." evidence="7">
    <location>
        <begin position="1"/>
        <end position="142"/>
    </location>
</feature>
<feature type="splice variant" id="VSP_029907" description="In isoform 2." evidence="7">
    <original>LFRQDPDVSRLTQTYVMIFIPALPAAFLYTLQVKYLLNQ</original>
    <variation>MSDTSPQAGVLSRARLLQLRRHSSQRPERSGLAGLLERV</variation>
    <location>
        <begin position="143"/>
        <end position="181"/>
    </location>
</feature>
<evidence type="ECO:0000250" key="1">
    <source>
        <dbReference type="UniProtKB" id="Q96FL8"/>
    </source>
</evidence>
<evidence type="ECO:0000255" key="2"/>
<evidence type="ECO:0000269" key="3">
    <source>
    </source>
</evidence>
<evidence type="ECO:0000269" key="4">
    <source>
    </source>
</evidence>
<evidence type="ECO:0000269" key="5">
    <source>
    </source>
</evidence>
<evidence type="ECO:0000269" key="6">
    <source>
    </source>
</evidence>
<evidence type="ECO:0000303" key="7">
    <source>
    </source>
</evidence>
<evidence type="ECO:0000305" key="8"/>
<evidence type="ECO:0007744" key="9">
    <source>
    </source>
</evidence>
<reference key="1">
    <citation type="journal article" date="2005" name="Science">
        <title>The transcriptional landscape of the mammalian genome.</title>
        <authorList>
            <person name="Carninci P."/>
            <person name="Kasukawa T."/>
            <person name="Katayama S."/>
            <person name="Gough J."/>
            <person name="Frith M.C."/>
            <person name="Maeda N."/>
            <person name="Oyama R."/>
            <person name="Ravasi T."/>
            <person name="Lenhard B."/>
            <person name="Wells C."/>
            <person name="Kodzius R."/>
            <person name="Shimokawa K."/>
            <person name="Bajic V.B."/>
            <person name="Brenner S.E."/>
            <person name="Batalov S."/>
            <person name="Forrest A.R."/>
            <person name="Zavolan M."/>
            <person name="Davis M.J."/>
            <person name="Wilming L.G."/>
            <person name="Aidinis V."/>
            <person name="Allen J.E."/>
            <person name="Ambesi-Impiombato A."/>
            <person name="Apweiler R."/>
            <person name="Aturaliya R.N."/>
            <person name="Bailey T.L."/>
            <person name="Bansal M."/>
            <person name="Baxter L."/>
            <person name="Beisel K.W."/>
            <person name="Bersano T."/>
            <person name="Bono H."/>
            <person name="Chalk A.M."/>
            <person name="Chiu K.P."/>
            <person name="Choudhary V."/>
            <person name="Christoffels A."/>
            <person name="Clutterbuck D.R."/>
            <person name="Crowe M.L."/>
            <person name="Dalla E."/>
            <person name="Dalrymple B.P."/>
            <person name="de Bono B."/>
            <person name="Della Gatta G."/>
            <person name="di Bernardo D."/>
            <person name="Down T."/>
            <person name="Engstrom P."/>
            <person name="Fagiolini M."/>
            <person name="Faulkner G."/>
            <person name="Fletcher C.F."/>
            <person name="Fukushima T."/>
            <person name="Furuno M."/>
            <person name="Futaki S."/>
            <person name="Gariboldi M."/>
            <person name="Georgii-Hemming P."/>
            <person name="Gingeras T.R."/>
            <person name="Gojobori T."/>
            <person name="Green R.E."/>
            <person name="Gustincich S."/>
            <person name="Harbers M."/>
            <person name="Hayashi Y."/>
            <person name="Hensch T.K."/>
            <person name="Hirokawa N."/>
            <person name="Hill D."/>
            <person name="Huminiecki L."/>
            <person name="Iacono M."/>
            <person name="Ikeo K."/>
            <person name="Iwama A."/>
            <person name="Ishikawa T."/>
            <person name="Jakt M."/>
            <person name="Kanapin A."/>
            <person name="Katoh M."/>
            <person name="Kawasawa Y."/>
            <person name="Kelso J."/>
            <person name="Kitamura H."/>
            <person name="Kitano H."/>
            <person name="Kollias G."/>
            <person name="Krishnan S.P."/>
            <person name="Kruger A."/>
            <person name="Kummerfeld S.K."/>
            <person name="Kurochkin I.V."/>
            <person name="Lareau L.F."/>
            <person name="Lazarevic D."/>
            <person name="Lipovich L."/>
            <person name="Liu J."/>
            <person name="Liuni S."/>
            <person name="McWilliam S."/>
            <person name="Madan Babu M."/>
            <person name="Madera M."/>
            <person name="Marchionni L."/>
            <person name="Matsuda H."/>
            <person name="Matsuzawa S."/>
            <person name="Miki H."/>
            <person name="Mignone F."/>
            <person name="Miyake S."/>
            <person name="Morris K."/>
            <person name="Mottagui-Tabar S."/>
            <person name="Mulder N."/>
            <person name="Nakano N."/>
            <person name="Nakauchi H."/>
            <person name="Ng P."/>
            <person name="Nilsson R."/>
            <person name="Nishiguchi S."/>
            <person name="Nishikawa S."/>
            <person name="Nori F."/>
            <person name="Ohara O."/>
            <person name="Okazaki Y."/>
            <person name="Orlando V."/>
            <person name="Pang K.C."/>
            <person name="Pavan W.J."/>
            <person name="Pavesi G."/>
            <person name="Pesole G."/>
            <person name="Petrovsky N."/>
            <person name="Piazza S."/>
            <person name="Reed J."/>
            <person name="Reid J.F."/>
            <person name="Ring B.Z."/>
            <person name="Ringwald M."/>
            <person name="Rost B."/>
            <person name="Ruan Y."/>
            <person name="Salzberg S.L."/>
            <person name="Sandelin A."/>
            <person name="Schneider C."/>
            <person name="Schoenbach C."/>
            <person name="Sekiguchi K."/>
            <person name="Semple C.A."/>
            <person name="Seno S."/>
            <person name="Sessa L."/>
            <person name="Sheng Y."/>
            <person name="Shibata Y."/>
            <person name="Shimada H."/>
            <person name="Shimada K."/>
            <person name="Silva D."/>
            <person name="Sinclair B."/>
            <person name="Sperling S."/>
            <person name="Stupka E."/>
            <person name="Sugiura K."/>
            <person name="Sultana R."/>
            <person name="Takenaka Y."/>
            <person name="Taki K."/>
            <person name="Tammoja K."/>
            <person name="Tan S.L."/>
            <person name="Tang S."/>
            <person name="Taylor M.S."/>
            <person name="Tegner J."/>
            <person name="Teichmann S.A."/>
            <person name="Ueda H.R."/>
            <person name="van Nimwegen E."/>
            <person name="Verardo R."/>
            <person name="Wei C.L."/>
            <person name="Yagi K."/>
            <person name="Yamanishi H."/>
            <person name="Zabarovsky E."/>
            <person name="Zhu S."/>
            <person name="Zimmer A."/>
            <person name="Hide W."/>
            <person name="Bult C."/>
            <person name="Grimmond S.M."/>
            <person name="Teasdale R.D."/>
            <person name="Liu E.T."/>
            <person name="Brusic V."/>
            <person name="Quackenbush J."/>
            <person name="Wahlestedt C."/>
            <person name="Mattick J.S."/>
            <person name="Hume D.A."/>
            <person name="Kai C."/>
            <person name="Sasaki D."/>
            <person name="Tomaru Y."/>
            <person name="Fukuda S."/>
            <person name="Kanamori-Katayama M."/>
            <person name="Suzuki M."/>
            <person name="Aoki J."/>
            <person name="Arakawa T."/>
            <person name="Iida J."/>
            <person name="Imamura K."/>
            <person name="Itoh M."/>
            <person name="Kato T."/>
            <person name="Kawaji H."/>
            <person name="Kawagashira N."/>
            <person name="Kawashima T."/>
            <person name="Kojima M."/>
            <person name="Kondo S."/>
            <person name="Konno H."/>
            <person name="Nakano K."/>
            <person name="Ninomiya N."/>
            <person name="Nishio T."/>
            <person name="Okada M."/>
            <person name="Plessy C."/>
            <person name="Shibata K."/>
            <person name="Shiraki T."/>
            <person name="Suzuki S."/>
            <person name="Tagami M."/>
            <person name="Waki K."/>
            <person name="Watahiki A."/>
            <person name="Okamura-Oho Y."/>
            <person name="Suzuki H."/>
            <person name="Kawai J."/>
            <person name="Hayashizaki Y."/>
        </authorList>
    </citation>
    <scope>NUCLEOTIDE SEQUENCE [LARGE SCALE MRNA] (ISOFORM 2)</scope>
    <source>
        <strain>C57BL/6J</strain>
        <tissue>Liver</tissue>
        <tissue>Tongue</tissue>
    </source>
</reference>
<reference key="2">
    <citation type="journal article" date="2009" name="PLoS Biol.">
        <title>Lineage-specific biology revealed by a finished genome assembly of the mouse.</title>
        <authorList>
            <person name="Church D.M."/>
            <person name="Goodstadt L."/>
            <person name="Hillier L.W."/>
            <person name="Zody M.C."/>
            <person name="Goldstein S."/>
            <person name="She X."/>
            <person name="Bult C.J."/>
            <person name="Agarwala R."/>
            <person name="Cherry J.L."/>
            <person name="DiCuccio M."/>
            <person name="Hlavina W."/>
            <person name="Kapustin Y."/>
            <person name="Meric P."/>
            <person name="Maglott D."/>
            <person name="Birtle Z."/>
            <person name="Marques A.C."/>
            <person name="Graves T."/>
            <person name="Zhou S."/>
            <person name="Teague B."/>
            <person name="Potamousis K."/>
            <person name="Churas C."/>
            <person name="Place M."/>
            <person name="Herschleb J."/>
            <person name="Runnheim R."/>
            <person name="Forrest D."/>
            <person name="Amos-Landgraf J."/>
            <person name="Schwartz D.C."/>
            <person name="Cheng Z."/>
            <person name="Lindblad-Toh K."/>
            <person name="Eichler E.E."/>
            <person name="Ponting C.P."/>
        </authorList>
    </citation>
    <scope>NUCLEOTIDE SEQUENCE [LARGE SCALE GENOMIC DNA]</scope>
    <source>
        <strain>C57BL/6J</strain>
    </source>
</reference>
<reference key="3">
    <citation type="journal article" date="2004" name="Genome Res.">
        <title>The status, quality, and expansion of the NIH full-length cDNA project: the Mammalian Gene Collection (MGC).</title>
        <authorList>
            <consortium name="The MGC Project Team"/>
        </authorList>
    </citation>
    <scope>NUCLEOTIDE SEQUENCE [LARGE SCALE MRNA] (ISOFORM 1)</scope>
    <source>
        <strain>FVB/N</strain>
        <tissue>Kidney</tissue>
    </source>
</reference>
<reference key="4">
    <citation type="journal article" date="2005" name="Proc. Natl. Acad. Sci. U.S.A.">
        <title>A human transporter protein that mediates the final excretion step for toxic organic cations.</title>
        <authorList>
            <person name="Otsuka M."/>
            <person name="Matsumoto T."/>
            <person name="Morimoto R."/>
            <person name="Arioka S."/>
            <person name="Omote H."/>
            <person name="Moriyama Y."/>
        </authorList>
    </citation>
    <scope>TISSUE SPECIFICITY</scope>
    <scope>SUBCELLULAR LOCATION</scope>
</reference>
<reference key="5">
    <citation type="journal article" date="2006" name="Am. J. Physiol.">
        <title>Wide variety of locations for rodent MATE1, a transporter protein that mediates the final excretion step for toxic organic cations.</title>
        <authorList>
            <person name="Hiasa M."/>
            <person name="Matsumoto T."/>
            <person name="Komatsu T."/>
            <person name="Moriyama Y."/>
        </authorList>
    </citation>
    <scope>SUBCELLULAR LOCATION</scope>
    <scope>FUNCTION</scope>
    <scope>TRANSPORTER ACTIVITY</scope>
    <scope>BIOPHYSICOCHEMICAL PROPERTIES</scope>
    <scope>TISSUE SPECIFICITY</scope>
</reference>
<reference key="6">
    <citation type="journal article" date="2009" name="Mol. Pharmacol.">
        <title>Targeted disruption of the multidrug and toxin extrusion 1 (mate1) gene in mice reduces renal secretion of metformin.</title>
        <authorList>
            <person name="Tsuda M."/>
            <person name="Terada T."/>
            <person name="Mizuno T."/>
            <person name="Katsura T."/>
            <person name="Shimakura J."/>
            <person name="Inui K."/>
        </authorList>
    </citation>
    <scope>DISRUPTION PHENOTYPE</scope>
    <scope>FUNCTION</scope>
    <scope>TRANSPORTER ACTIVITY</scope>
</reference>
<reference key="7">
    <citation type="journal article" date="2010" name="Cell">
        <title>A tissue-specific atlas of mouse protein phosphorylation and expression.</title>
        <authorList>
            <person name="Huttlin E.L."/>
            <person name="Jedrychowski M.P."/>
            <person name="Elias J.E."/>
            <person name="Goswami T."/>
            <person name="Rad R."/>
            <person name="Beausoleil S.A."/>
            <person name="Villen J."/>
            <person name="Haas W."/>
            <person name="Sowa M.E."/>
            <person name="Gygi S.P."/>
        </authorList>
    </citation>
    <scope>PHOSPHORYLATION [LARGE SCALE ANALYSIS] AT SER-18</scope>
    <scope>IDENTIFICATION BY MASS SPECTROMETRY [LARGE SCALE ANALYSIS]</scope>
    <source>
        <tissue>Kidney</tissue>
    </source>
</reference>
<reference key="8">
    <citation type="journal article" date="2014" name="Proc. Natl. Acad. Sci. U.S.A.">
        <title>OCT1 is a high-capacity thiamine transporter that regulates hepatic steatosis and is a target of metformin.</title>
        <authorList>
            <person name="Chen L."/>
            <person name="Shu Y."/>
            <person name="Liang X."/>
            <person name="Chen E.C."/>
            <person name="Yee S.W."/>
            <person name="Zur A.A."/>
            <person name="Li S."/>
            <person name="Xu L."/>
            <person name="Keshari K.R."/>
            <person name="Lin M.J."/>
            <person name="Chien H.C."/>
            <person name="Zhang Y."/>
            <person name="Morrissey K.M."/>
            <person name="Liu J."/>
            <person name="Ostrem J."/>
            <person name="Younger N.S."/>
            <person name="Kurhanewicz J."/>
            <person name="Shokat K.M."/>
            <person name="Ashrafi K."/>
            <person name="Giacomini K.M."/>
        </authorList>
    </citation>
    <scope>TISSUE SPECIFICITY</scope>
</reference>
<comment type="function">
    <text evidence="1 4 5">Multidrug efflux pump that functions as a H(+)/organic cation antiporter (PubMed:16641166, PubMed:19332510). Plays a physiological role in the excretion of cationic compounds including endogenous metabolites, drugs, toxins through the kidney and liver, into urine and bile respectively (By similarity). Mediates the efflux of endogenous compounds such as creatinine, vitamin B1/thiamine, agmatine and estrone-3-sulfate (By similarity). May also contribute to regulate the transport of cationic compounds in testis across the blood-testis-barrier (By similarity).</text>
</comment>
<comment type="catalytic activity">
    <reaction evidence="1">
        <text>thiamine(out) + H(+)(in) = thiamine(in) + H(+)(out)</text>
        <dbReference type="Rhea" id="RHEA:71271"/>
        <dbReference type="ChEBI" id="CHEBI:15378"/>
        <dbReference type="ChEBI" id="CHEBI:18385"/>
    </reaction>
</comment>
<comment type="catalytic activity">
    <reaction evidence="1">
        <text>estrone 3-sulfate(in) + H(+)(out) = estrone 3-sulfate(out) + H(+)(in)</text>
        <dbReference type="Rhea" id="RHEA:72139"/>
        <dbReference type="ChEBI" id="CHEBI:15378"/>
        <dbReference type="ChEBI" id="CHEBI:60050"/>
    </reaction>
</comment>
<comment type="catalytic activity">
    <reaction evidence="1">
        <text>creatinine(in) + H(+)(out) = creatinine(out) + H(+)(in)</text>
        <dbReference type="Rhea" id="RHEA:72183"/>
        <dbReference type="ChEBI" id="CHEBI:15378"/>
        <dbReference type="ChEBI" id="CHEBI:16737"/>
    </reaction>
</comment>
<comment type="catalytic activity">
    <reaction evidence="1">
        <text>agmatine(in) + H(+)(out) = agmatine(out) + H(+)(in)</text>
        <dbReference type="Rhea" id="RHEA:72127"/>
        <dbReference type="ChEBI" id="CHEBI:15378"/>
        <dbReference type="ChEBI" id="CHEBI:58145"/>
    </reaction>
    <physiologicalReaction direction="left-to-right" evidence="1">
        <dbReference type="Rhea" id="RHEA:72128"/>
    </physiologicalReaction>
    <physiologicalReaction direction="right-to-left" evidence="1">
        <dbReference type="Rhea" id="RHEA:72129"/>
    </physiologicalReaction>
</comment>
<comment type="biophysicochemical properties">
    <kinetics>
        <KM evidence="4">0.41 mM for TEA</KM>
        <Vmax evidence="4">0.6 nmol/min/mg enzyme toward TEA</Vmax>
    </kinetics>
    <phDependence>
        <text evidence="4">Optimum pH is 8.0-8.5. Active from pH 6 to 8.5.</text>
    </phDependence>
</comment>
<comment type="subcellular location">
    <subcellularLocation>
        <location evidence="3">Cell membrane</location>
        <topology evidence="2">Multi-pass membrane protein</topology>
    </subcellularLocation>
    <subcellularLocation>
        <location evidence="3 4">Apical cell membrane</location>
        <topology evidence="2">Multi-pass membrane protein</topology>
    </subcellularLocation>
    <text evidence="1">Localizes to the plasma membrane; at the brush border membranes of the proximal tubules (kidney) and at the bile caniculi (liver).</text>
</comment>
<comment type="alternative products">
    <event type="alternative splicing"/>
    <isoform>
        <id>Q8K0H1-1</id>
        <name>1</name>
        <sequence type="displayed"/>
    </isoform>
    <isoform>
        <id>Q8K0H1-2</id>
        <name>2</name>
        <sequence type="described" ref="VSP_029906 VSP_029907"/>
    </isoform>
</comment>
<comment type="tissue specificity">
    <text evidence="3 4 6">Predominantly expressed in kidney and liver (PubMed:24961373). Also expressed in various cells, including brain glia-like cells and capillaries, pancreatic duct cells, urinary bladder epithelium, adrenal gland cortex, heart, stomach, small intestine, thyroid gland, testes, alpha cells of the islets of Langerhans, Leydig cells, and vitamin A-storing Ito cells. Expressed in heart, stomach, small intestine, bladder, thyroid gland, adrenal gland and testes (at protein level).</text>
</comment>
<comment type="disruption phenotype">
    <text evidence="5">Deficient mice are viable and fertile without any overt phenotypical or histological alterations. However, mice exhibit increased blood urea nitrogen, increased circulating creatinine, and abnormal metformin pharmacokinetics, including increased plasma and tissue metformin concentration with decreased kidney and liver metformin clearance.</text>
</comment>
<comment type="miscellaneous">
    <text evidence="1">Mediates the efflux of cationic compounds such as the model cations, tetraethylammonium (TEA), the neurotoxin 1-methyl-4-phenylpyridinium (MPP), the platinum-based drugs cisplatin and oxaliplatin, the drugs procainamide, acyclovir and topotecan, or weak bases that are positively charged at physiological pH, such as cimetidine or the antidiabetic drug metformin.</text>
</comment>
<comment type="similarity">
    <text evidence="8">Belongs to the multi antimicrobial extrusion (MATE) (TC 2.A.66.1) family.</text>
</comment>
<comment type="sequence caution" evidence="8">
    <conflict type="frameshift">
        <sequence resource="EMBL" id="BC031436"/>
    </conflict>
</comment>
<name>S47A1_MOUSE</name>
<proteinExistence type="evidence at protein level"/>
<sequence>MERTEESAPGPGGADAASERRGLRCLLLPGFLEELRALLVLAGPAFLAQLMMFLISFISSVFCGHLGKLELDAVTLAIAVINVTGISVGHGLSSACDTLISQTYGSQNLKHVGVILQRGTLILLLCCFPCWALFINTEQILLLFRQDPDVSRLTQTYVMIFIPALPAAFLYTLQVKYLLNQGIVLPQIMTGIAANLVNALANYVFLYHLHLGVMGSALANTISQFALAIFLFLYILWRRLHQATWGGWSWECLQDWASFLRLAIPSMLMLCIEWWAYEVGSFLSGILGMVELGAQSITYELAIIVYMIPSGFSVAANVRVGNALGAGNIDQAKKSSAISLIVTELFAVTFCVLLLGCKDLVGYIFTTDRDIVALVAQVIPIYAVSHLFEGLACTCGGILRGTGNQKVGAIVNAIGYYVIGLPIGIALMFAAKLGVIGLWSGIIICTTCQTTCFLAFIARLNWKRACQQAQVHANLKVNVALNSAVSHEPAHPVCPESHGEIMMTDLEKKDETQLDQPMNQQQALPIRPKDSNKLSGKQLALRRGLLLLGVVLVLVGGILVRVYIRIE</sequence>
<dbReference type="EMBL" id="AK004994">
    <property type="protein sequence ID" value="BAB23729.1"/>
    <property type="molecule type" value="mRNA"/>
</dbReference>
<dbReference type="EMBL" id="AK009038">
    <property type="protein sequence ID" value="BAB26040.1"/>
    <property type="molecule type" value="mRNA"/>
</dbReference>
<dbReference type="EMBL" id="AL669884">
    <property type="status" value="NOT_ANNOTATED_CDS"/>
    <property type="molecule type" value="Genomic_DNA"/>
</dbReference>
<dbReference type="EMBL" id="BC031436">
    <property type="status" value="NOT_ANNOTATED_CDS"/>
    <property type="molecule type" value="mRNA"/>
</dbReference>
<dbReference type="CCDS" id="CCDS24811.2">
    <molecule id="Q8K0H1-1"/>
</dbReference>
<dbReference type="RefSeq" id="NP_080459.2">
    <molecule id="Q8K0H1-1"/>
    <property type="nucleotide sequence ID" value="NM_026183.5"/>
</dbReference>
<dbReference type="RefSeq" id="XP_011247491.1">
    <molecule id="Q8K0H1-2"/>
    <property type="nucleotide sequence ID" value="XM_011249189.4"/>
</dbReference>
<dbReference type="SMR" id="Q8K0H1"/>
<dbReference type="FunCoup" id="Q8K0H1">
    <property type="interactions" value="124"/>
</dbReference>
<dbReference type="STRING" id="10090.ENSMUSP00000010267"/>
<dbReference type="BindingDB" id="Q8K0H1"/>
<dbReference type="ChEMBL" id="CHEMBL3091264"/>
<dbReference type="DrugCentral" id="Q8K0H1"/>
<dbReference type="TCDB" id="2.A.66.1.18">
    <property type="family name" value="the multidrug/oligosaccharidyl-lipid/polysaccharide (mop) flippase superfamily"/>
</dbReference>
<dbReference type="iPTMnet" id="Q8K0H1"/>
<dbReference type="PhosphoSitePlus" id="Q8K0H1"/>
<dbReference type="SwissPalm" id="Q8K0H1"/>
<dbReference type="jPOST" id="Q8K0H1"/>
<dbReference type="PaxDb" id="10090-ENSMUSP00000010267"/>
<dbReference type="PeptideAtlas" id="Q8K0H1"/>
<dbReference type="ProteomicsDB" id="260794">
    <molecule id="Q8K0H1-1"/>
</dbReference>
<dbReference type="ProteomicsDB" id="260795">
    <molecule id="Q8K0H1-2"/>
</dbReference>
<dbReference type="Antibodypedia" id="13691">
    <property type="antibodies" value="141 antibodies from 29 providers"/>
</dbReference>
<dbReference type="Ensembl" id="ENSMUST00000010267.10">
    <molecule id="Q8K0H1-1"/>
    <property type="protein sequence ID" value="ENSMUSP00000010267.4"/>
    <property type="gene ID" value="ENSMUSG00000010122.15"/>
</dbReference>
<dbReference type="GeneID" id="67473"/>
<dbReference type="KEGG" id="mmu:67473"/>
<dbReference type="UCSC" id="uc007jhh.2">
    <molecule id="Q8K0H1-2"/>
    <property type="organism name" value="mouse"/>
</dbReference>
<dbReference type="UCSC" id="uc007jhi.2">
    <molecule id="Q8K0H1-1"/>
    <property type="organism name" value="mouse"/>
</dbReference>
<dbReference type="AGR" id="MGI:1914723"/>
<dbReference type="CTD" id="55244"/>
<dbReference type="MGI" id="MGI:1914723">
    <property type="gene designation" value="Slc47a1"/>
</dbReference>
<dbReference type="VEuPathDB" id="HostDB:ENSMUSG00000010122"/>
<dbReference type="eggNOG" id="KOG1347">
    <property type="taxonomic scope" value="Eukaryota"/>
</dbReference>
<dbReference type="GeneTree" id="ENSGT00940000161644"/>
<dbReference type="HOGENOM" id="CLU_012893_1_3_1"/>
<dbReference type="InParanoid" id="Q8K0H1"/>
<dbReference type="OMA" id="WFFVWKL"/>
<dbReference type="OrthoDB" id="2126698at2759"/>
<dbReference type="PhylomeDB" id="Q8K0H1"/>
<dbReference type="TreeFam" id="TF324441"/>
<dbReference type="Reactome" id="R-MMU-425366">
    <property type="pathway name" value="Transport of bile salts and organic acids, metal ions and amine compounds"/>
</dbReference>
<dbReference type="BioGRID-ORCS" id="67473">
    <property type="hits" value="1 hit in 78 CRISPR screens"/>
</dbReference>
<dbReference type="PRO" id="PR:Q8K0H1"/>
<dbReference type="Proteomes" id="UP000000589">
    <property type="component" value="Chromosome 11"/>
</dbReference>
<dbReference type="RNAct" id="Q8K0H1">
    <property type="molecule type" value="protein"/>
</dbReference>
<dbReference type="Bgee" id="ENSMUSG00000010122">
    <property type="expression patterns" value="Expressed in renal cortex tubule and 137 other cell types or tissues"/>
</dbReference>
<dbReference type="ExpressionAtlas" id="Q8K0H1">
    <property type="expression patterns" value="baseline and differential"/>
</dbReference>
<dbReference type="GO" id="GO:0016324">
    <property type="term" value="C:apical plasma membrane"/>
    <property type="evidence" value="ECO:0007669"/>
    <property type="project" value="UniProtKB-SubCell"/>
</dbReference>
<dbReference type="GO" id="GO:0016323">
    <property type="term" value="C:basolateral plasma membrane"/>
    <property type="evidence" value="ECO:0007669"/>
    <property type="project" value="Ensembl"/>
</dbReference>
<dbReference type="GO" id="GO:0005886">
    <property type="term" value="C:plasma membrane"/>
    <property type="evidence" value="ECO:0000314"/>
    <property type="project" value="UniProtKB"/>
</dbReference>
<dbReference type="GO" id="GO:0015297">
    <property type="term" value="F:antiporter activity"/>
    <property type="evidence" value="ECO:0000314"/>
    <property type="project" value="UniProtKB"/>
</dbReference>
<dbReference type="GO" id="GO:0061459">
    <property type="term" value="F:L-arginine transmembrane transporter activity"/>
    <property type="evidence" value="ECO:0007669"/>
    <property type="project" value="Ensembl"/>
</dbReference>
<dbReference type="GO" id="GO:0015101">
    <property type="term" value="F:organic cation transmembrane transporter activity"/>
    <property type="evidence" value="ECO:0000250"/>
    <property type="project" value="UniProtKB"/>
</dbReference>
<dbReference type="GO" id="GO:0140968">
    <property type="term" value="F:polyspecific organic cation:proton antiporter activity"/>
    <property type="evidence" value="ECO:0000314"/>
    <property type="project" value="UniProtKB"/>
</dbReference>
<dbReference type="GO" id="GO:0015489">
    <property type="term" value="F:putrescine transmembrane transporter activity"/>
    <property type="evidence" value="ECO:0000250"/>
    <property type="project" value="UniProtKB"/>
</dbReference>
<dbReference type="GO" id="GO:0015234">
    <property type="term" value="F:thiamine transmembrane transporter activity"/>
    <property type="evidence" value="ECO:0000250"/>
    <property type="project" value="UniProtKB"/>
</dbReference>
<dbReference type="GO" id="GO:0042910">
    <property type="term" value="F:xenobiotic transmembrane transporter activity"/>
    <property type="evidence" value="ECO:0007669"/>
    <property type="project" value="Ensembl"/>
</dbReference>
<dbReference type="GO" id="GO:0097638">
    <property type="term" value="P:L-arginine import across plasma membrane"/>
    <property type="evidence" value="ECO:0007669"/>
    <property type="project" value="Ensembl"/>
</dbReference>
<dbReference type="GO" id="GO:0098655">
    <property type="term" value="P:monoatomic cation transmembrane transport"/>
    <property type="evidence" value="ECO:0000314"/>
    <property type="project" value="UniProtKB"/>
</dbReference>
<dbReference type="GO" id="GO:0015847">
    <property type="term" value="P:putrescine transport"/>
    <property type="evidence" value="ECO:0000250"/>
    <property type="project" value="UniProtKB"/>
</dbReference>
<dbReference type="GO" id="GO:1990961">
    <property type="term" value="P:xenobiotic detoxification by transmembrane export across the plasma membrane"/>
    <property type="evidence" value="ECO:0007669"/>
    <property type="project" value="Ensembl"/>
</dbReference>
<dbReference type="GO" id="GO:0006855">
    <property type="term" value="P:xenobiotic transmembrane transport"/>
    <property type="evidence" value="ECO:0000314"/>
    <property type="project" value="UniProtKB"/>
</dbReference>
<dbReference type="CDD" id="cd13132">
    <property type="entry name" value="MATE_eukaryotic"/>
    <property type="match status" value="1"/>
</dbReference>
<dbReference type="InterPro" id="IPR045069">
    <property type="entry name" value="MATE_euk"/>
</dbReference>
<dbReference type="InterPro" id="IPR002528">
    <property type="entry name" value="MATE_fam"/>
</dbReference>
<dbReference type="NCBIfam" id="TIGR00797">
    <property type="entry name" value="matE"/>
    <property type="match status" value="1"/>
</dbReference>
<dbReference type="PANTHER" id="PTHR11206">
    <property type="entry name" value="MULTIDRUG RESISTANCE PROTEIN"/>
    <property type="match status" value="1"/>
</dbReference>
<dbReference type="Pfam" id="PF01554">
    <property type="entry name" value="MatE"/>
    <property type="match status" value="2"/>
</dbReference>
<organism>
    <name type="scientific">Mus musculus</name>
    <name type="common">Mouse</name>
    <dbReference type="NCBI Taxonomy" id="10090"/>
    <lineage>
        <taxon>Eukaryota</taxon>
        <taxon>Metazoa</taxon>
        <taxon>Chordata</taxon>
        <taxon>Craniata</taxon>
        <taxon>Vertebrata</taxon>
        <taxon>Euteleostomi</taxon>
        <taxon>Mammalia</taxon>
        <taxon>Eutheria</taxon>
        <taxon>Euarchontoglires</taxon>
        <taxon>Glires</taxon>
        <taxon>Rodentia</taxon>
        <taxon>Myomorpha</taxon>
        <taxon>Muroidea</taxon>
        <taxon>Muridae</taxon>
        <taxon>Murinae</taxon>
        <taxon>Mus</taxon>
        <taxon>Mus</taxon>
    </lineage>
</organism>
<keyword id="KW-0007">Acetylation</keyword>
<keyword id="KW-0025">Alternative splicing</keyword>
<keyword id="KW-0050">Antiport</keyword>
<keyword id="KW-1003">Cell membrane</keyword>
<keyword id="KW-0472">Membrane</keyword>
<keyword id="KW-0597">Phosphoprotein</keyword>
<keyword id="KW-1185">Reference proteome</keyword>
<keyword id="KW-0812">Transmembrane</keyword>
<keyword id="KW-1133">Transmembrane helix</keyword>
<keyword id="KW-0813">Transport</keyword>
<protein>
    <recommendedName>
        <fullName>Multidrug and toxin extrusion protein 1</fullName>
        <shortName>MATE-1</shortName>
        <shortName>mMATE-1</shortName>
    </recommendedName>
    <alternativeName>
        <fullName>Solute carrier family 47 member 1</fullName>
    </alternativeName>
</protein>